<sequence>MTMLLPLFILVGFIADYFVNAIAYHLSPLEDKTALTFRQVLVHFRQKKYAWHDTVPLILCVAAAIACALAPFTPIVTGALFLYFCFVLTLSVIDFRTQLLPDKLTLPLLWLGLVFNAQYGLIDLHDAVYGAVAGYGVLWCVYWGVWLVCHKEGLGYGDFKLLAAAGAWCGWQTLPMILLIASLGGIGYAIVSQLLQRRTITTIAFGPWLALGSMINLGYLAWISY</sequence>
<name>LEP4_ECOLI</name>
<keyword id="KW-0997">Cell inner membrane</keyword>
<keyword id="KW-1003">Cell membrane</keyword>
<keyword id="KW-0378">Hydrolase</keyword>
<keyword id="KW-0472">Membrane</keyword>
<keyword id="KW-0645">Protease</keyword>
<keyword id="KW-1185">Reference proteome</keyword>
<keyword id="KW-0949">S-adenosyl-L-methionine</keyword>
<keyword id="KW-0808">Transferase</keyword>
<keyword id="KW-0812">Transmembrane</keyword>
<keyword id="KW-1133">Transmembrane helix</keyword>
<keyword id="KW-0813">Transport</keyword>
<comment type="function">
    <text evidence="6">Plays a role in type II pseudopili formation by proteolytically removing the leader sequence from substrate proteins and subsequently monomethylating the alpha-amino group of the newly exposed N-terminal phenylalanine. Substrates include proteins required for biogenesis of the type II general secretory apparatus.</text>
</comment>
<comment type="catalytic activity">
    <reaction evidence="1">
        <text>Typically cleaves a -Gly-|-Phe- bond to release an N-terminal, basic peptide of 5-8 residues from type IV prepilin, and then N-methylates the new N-terminal amino group, the methyl donor being S-adenosyl-L-methionine.</text>
        <dbReference type="EC" id="3.4.23.43"/>
    </reaction>
</comment>
<comment type="subcellular location">
    <subcellularLocation>
        <location evidence="1">Cell inner membrane</location>
        <topology evidence="1">Multi-pass membrane protein</topology>
    </subcellularLocation>
</comment>
<comment type="induction">
    <text evidence="3">Silenced by the DNA-binding protein H-NS under standard growth conditions.</text>
</comment>
<comment type="miscellaneous">
    <text evidence="6">Part of a cryptic operon that encodes proteins involved in type II secretion machinery in other organisms, but is probably not expressed under laboratory conditions. However, GspO is functional when expressed from a stronger promoter (PubMed:8655552).</text>
</comment>
<comment type="similarity">
    <text evidence="5">Belongs to the peptidase A24 family.</text>
</comment>
<evidence type="ECO:0000250" key="1">
    <source>
        <dbReference type="UniProtKB" id="P22610"/>
    </source>
</evidence>
<evidence type="ECO:0000255" key="2"/>
<evidence type="ECO:0000269" key="3">
    <source>
    </source>
</evidence>
<evidence type="ECO:0000269" key="4">
    <source>
    </source>
</evidence>
<evidence type="ECO:0000305" key="5"/>
<evidence type="ECO:0000305" key="6">
    <source>
    </source>
</evidence>
<dbReference type="EC" id="3.4.23.43" evidence="4"/>
<dbReference type="EC" id="2.1.1.-" evidence="1"/>
<dbReference type="EMBL" id="L28106">
    <property type="protein sequence ID" value="AAC36928.1"/>
    <property type="molecule type" value="Genomic_DNA"/>
</dbReference>
<dbReference type="EMBL" id="U18997">
    <property type="protein sequence ID" value="AAA58132.1"/>
    <property type="molecule type" value="Genomic_DNA"/>
</dbReference>
<dbReference type="EMBL" id="U00096">
    <property type="protein sequence ID" value="AAC76360.1"/>
    <property type="molecule type" value="Genomic_DNA"/>
</dbReference>
<dbReference type="EMBL" id="AP009048">
    <property type="protein sequence ID" value="BAE77956.1"/>
    <property type="molecule type" value="Genomic_DNA"/>
</dbReference>
<dbReference type="EMBL" id="M27176">
    <property type="protein sequence ID" value="AAC13988.1"/>
    <property type="molecule type" value="mRNA"/>
</dbReference>
<dbReference type="PIR" id="B65127">
    <property type="entry name" value="B65127"/>
</dbReference>
<dbReference type="RefSeq" id="NP_417794.1">
    <property type="nucleotide sequence ID" value="NC_000913.3"/>
</dbReference>
<dbReference type="RefSeq" id="WP_000178154.1">
    <property type="nucleotide sequence ID" value="NZ_LN832404.1"/>
</dbReference>
<dbReference type="BioGRID" id="4262465">
    <property type="interactions" value="210"/>
</dbReference>
<dbReference type="FunCoup" id="P25960">
    <property type="interactions" value="124"/>
</dbReference>
<dbReference type="STRING" id="511145.b3335"/>
<dbReference type="MEROPS" id="A24.A10"/>
<dbReference type="PaxDb" id="511145-b3335"/>
<dbReference type="EnsemblBacteria" id="AAC76360">
    <property type="protein sequence ID" value="AAC76360"/>
    <property type="gene ID" value="b3335"/>
</dbReference>
<dbReference type="GeneID" id="947840"/>
<dbReference type="KEGG" id="ecj:JW3297"/>
<dbReference type="KEGG" id="eco:b3335"/>
<dbReference type="KEGG" id="ecoc:C3026_18115"/>
<dbReference type="PATRIC" id="fig|1411691.4.peg.3396"/>
<dbReference type="EchoBASE" id="EB1334"/>
<dbReference type="eggNOG" id="COG1989">
    <property type="taxonomic scope" value="Bacteria"/>
</dbReference>
<dbReference type="HOGENOM" id="CLU_057101_5_0_6"/>
<dbReference type="InParanoid" id="P25960"/>
<dbReference type="OMA" id="LAPAIWI"/>
<dbReference type="OrthoDB" id="9789291at2"/>
<dbReference type="PhylomeDB" id="P25960"/>
<dbReference type="BioCyc" id="EcoCyc:EG11359-MONOMER"/>
<dbReference type="BioCyc" id="MetaCyc:EG11359-MONOMER"/>
<dbReference type="PRO" id="PR:P25960"/>
<dbReference type="Proteomes" id="UP000000625">
    <property type="component" value="Chromosome"/>
</dbReference>
<dbReference type="GO" id="GO:0005886">
    <property type="term" value="C:plasma membrane"/>
    <property type="evidence" value="ECO:0000314"/>
    <property type="project" value="EcoCyc"/>
</dbReference>
<dbReference type="GO" id="GO:0004190">
    <property type="term" value="F:aspartic-type endopeptidase activity"/>
    <property type="evidence" value="ECO:0000318"/>
    <property type="project" value="GO_Central"/>
</dbReference>
<dbReference type="GO" id="GO:0008233">
    <property type="term" value="F:peptidase activity"/>
    <property type="evidence" value="ECO:0000269"/>
    <property type="project" value="EcoCyc"/>
</dbReference>
<dbReference type="GO" id="GO:0016740">
    <property type="term" value="F:transferase activity"/>
    <property type="evidence" value="ECO:0007669"/>
    <property type="project" value="UniProtKB-KW"/>
</dbReference>
<dbReference type="GO" id="GO:0006465">
    <property type="term" value="P:signal peptide processing"/>
    <property type="evidence" value="ECO:0000318"/>
    <property type="project" value="GO_Central"/>
</dbReference>
<dbReference type="FunFam" id="1.20.120.1220:FF:000009">
    <property type="entry name" value="Type 4 prepilin-like proteins leader peptide-processing enzyme"/>
    <property type="match status" value="1"/>
</dbReference>
<dbReference type="Gene3D" id="1.20.120.1220">
    <property type="match status" value="1"/>
</dbReference>
<dbReference type="InterPro" id="IPR014032">
    <property type="entry name" value="Peptidase_A24A_bac"/>
</dbReference>
<dbReference type="InterPro" id="IPR000045">
    <property type="entry name" value="Prepilin_IV_endopep_pep"/>
</dbReference>
<dbReference type="InterPro" id="IPR050882">
    <property type="entry name" value="Prepilin_peptidase/N-MTase"/>
</dbReference>
<dbReference type="PANTHER" id="PTHR30487:SF0">
    <property type="entry name" value="PREPILIN LEADER PEPTIDASE_N-METHYLTRANSFERASE-RELATED"/>
    <property type="match status" value="1"/>
</dbReference>
<dbReference type="PANTHER" id="PTHR30487">
    <property type="entry name" value="TYPE 4 PREPILIN-LIKE PROTEINS LEADER PEPTIDE-PROCESSING ENZYME"/>
    <property type="match status" value="1"/>
</dbReference>
<dbReference type="Pfam" id="PF01478">
    <property type="entry name" value="Peptidase_A24"/>
    <property type="match status" value="1"/>
</dbReference>
<dbReference type="PRINTS" id="PR00864">
    <property type="entry name" value="PREPILNPTASE"/>
</dbReference>
<gene>
    <name type="primary">gspO</name>
    <name type="synonym">hofD</name>
    <name type="synonym">hopD</name>
    <name type="synonym">hopO</name>
    <name type="synonym">yheC</name>
    <name type="ordered locus">b3335</name>
    <name type="ordered locus">JW3297</name>
</gene>
<feature type="chain" id="PRO_0000192632" description="Prepilin leader peptidase/N-methyltransferase">
    <location>
        <begin position="1"/>
        <end position="225"/>
    </location>
</feature>
<feature type="topological domain" description="Periplasmic" evidence="2">
    <location>
        <begin position="1"/>
        <end position="2"/>
    </location>
</feature>
<feature type="transmembrane region" description="Helical" evidence="2">
    <location>
        <begin position="3"/>
        <end position="23"/>
    </location>
</feature>
<feature type="topological domain" description="Cytoplasmic" evidence="2">
    <location>
        <begin position="24"/>
        <end position="67"/>
    </location>
</feature>
<feature type="transmembrane region" description="Helical" evidence="2">
    <location>
        <begin position="68"/>
        <end position="88"/>
    </location>
</feature>
<feature type="topological domain" description="Periplasmic" evidence="2">
    <location>
        <begin position="89"/>
        <end position="103"/>
    </location>
</feature>
<feature type="transmembrane region" description="Helical" evidence="2">
    <location>
        <begin position="104"/>
        <end position="124"/>
    </location>
</feature>
<feature type="topological domain" description="Cytoplasmic" evidence="2">
    <location>
        <begin position="125"/>
        <end position="127"/>
    </location>
</feature>
<feature type="transmembrane region" description="Helical" evidence="2">
    <location>
        <begin position="128"/>
        <end position="148"/>
    </location>
</feature>
<feature type="topological domain" description="Periplasmic" evidence="2">
    <location>
        <begin position="149"/>
        <end position="174"/>
    </location>
</feature>
<feature type="transmembrane region" description="Helical" evidence="2">
    <location>
        <begin position="175"/>
        <end position="195"/>
    </location>
</feature>
<feature type="topological domain" description="Cytoplasmic" evidence="2">
    <location>
        <begin position="196"/>
        <end position="202"/>
    </location>
</feature>
<feature type="transmembrane region" description="Helical" evidence="2">
    <location>
        <begin position="203"/>
        <end position="223"/>
    </location>
</feature>
<feature type="topological domain" description="Periplasmic" evidence="2">
    <location>
        <begin position="224"/>
        <end position="225"/>
    </location>
</feature>
<feature type="sequence conflict" description="In Ref. 4; AAC13988." evidence="5" ref="4">
    <original>A</original>
    <variation>P</variation>
    <location>
        <position position="131"/>
    </location>
</feature>
<feature type="sequence conflict" description="In Ref. 2; AAA58132." evidence="5" ref="2">
    <original>WL</original>
    <variation>CV</variation>
    <location>
        <begin position="208"/>
        <end position="209"/>
    </location>
</feature>
<reference key="1">
    <citation type="journal article" date="1994" name="Gene">
        <title>Escherichia coli contains a set of genes homologous to those involved in protein secretion, DNA uptake and the assembly of type-4 fimbriae in other bacteria.</title>
        <authorList>
            <person name="Whitchurch C.B."/>
            <person name="Mattick J.S."/>
        </authorList>
    </citation>
    <scope>NUCLEOTIDE SEQUENCE [GENOMIC DNA]</scope>
    <source>
        <strain>K12</strain>
    </source>
</reference>
<reference key="2">
    <citation type="journal article" date="1997" name="Science">
        <title>The complete genome sequence of Escherichia coli K-12.</title>
        <authorList>
            <person name="Blattner F.R."/>
            <person name="Plunkett G. III"/>
            <person name="Bloch C.A."/>
            <person name="Perna N.T."/>
            <person name="Burland V."/>
            <person name="Riley M."/>
            <person name="Collado-Vides J."/>
            <person name="Glasner J.D."/>
            <person name="Rode C.K."/>
            <person name="Mayhew G.F."/>
            <person name="Gregor J."/>
            <person name="Davis N.W."/>
            <person name="Kirkpatrick H.A."/>
            <person name="Goeden M.A."/>
            <person name="Rose D.J."/>
            <person name="Mau B."/>
            <person name="Shao Y."/>
        </authorList>
    </citation>
    <scope>NUCLEOTIDE SEQUENCE [LARGE SCALE GENOMIC DNA]</scope>
    <source>
        <strain>K12 / MG1655 / ATCC 47076</strain>
    </source>
</reference>
<reference key="3">
    <citation type="journal article" date="2006" name="Mol. Syst. Biol.">
        <title>Highly accurate genome sequences of Escherichia coli K-12 strains MG1655 and W3110.</title>
        <authorList>
            <person name="Hayashi K."/>
            <person name="Morooka N."/>
            <person name="Yamamoto Y."/>
            <person name="Fujita K."/>
            <person name="Isono K."/>
            <person name="Choi S."/>
            <person name="Ohtsubo E."/>
            <person name="Baba T."/>
            <person name="Wanner B.L."/>
            <person name="Mori H."/>
            <person name="Horiuchi T."/>
        </authorList>
    </citation>
    <scope>NUCLEOTIDE SEQUENCE [LARGE SCALE GENOMIC DNA]</scope>
    <source>
        <strain>K12 / W3110 / ATCC 27325 / DSM 5911</strain>
    </source>
</reference>
<reference key="4">
    <citation type="journal article" date="1989" name="J. Bacteriol.">
        <title>Cloning, sequencing, and mapping of the bacterioferritin gene (bfr) of Escherichia coli K-12.</title>
        <authorList>
            <person name="Andrews S.C."/>
            <person name="Harrison P.M."/>
            <person name="Guest J.R."/>
        </authorList>
    </citation>
    <scope>NUCLEOTIDE SEQUENCE [GENOMIC DNA] OF 116-225</scope>
    <source>
        <strain>K12</strain>
    </source>
</reference>
<reference key="5">
    <citation type="journal article" date="1991" name="Gene">
        <title>Characterisation of a Pseudomonas aeruginosa twitching motility gene and evidence for a specialised protein export system widespread in eubacteria.</title>
        <authorList>
            <person name="Whitchurch C.B."/>
            <person name="Hobbs M."/>
            <person name="Livingston S.P."/>
            <person name="Krishnapillai V."/>
            <person name="Mattick J.S."/>
        </authorList>
    </citation>
    <scope>IDENTIFICATION</scope>
</reference>
<reference key="6">
    <citation type="journal article" date="1996" name="J. Bacteriol.">
        <title>The cryptic general secretory pathway (gsp) operon of Escherichia coli K-12 encodes functional proteins.</title>
        <authorList>
            <person name="Francetic O."/>
            <person name="Pugsley A.P."/>
        </authorList>
    </citation>
    <scope>LACK OF EXPRESSION</scope>
    <scope>GENE NAME</scope>
    <source>
        <strain>K12 / MC4100 / ATCC 35695 / DSM 6574</strain>
    </source>
</reference>
<reference key="7">
    <citation type="journal article" date="2000" name="EMBO J.">
        <title>Expression of the endogenous type II secretion pathway in Escherichia coli leads to chitinase secretion.</title>
        <authorList>
            <person name="Francetic O."/>
            <person name="Belin D."/>
            <person name="Badaut C."/>
            <person name="Pugsley A.P."/>
        </authorList>
    </citation>
    <scope>LACK OF EXPRESSION</scope>
    <scope>TRANSCRIPTIONAL REGULATION</scope>
    <source>
        <strain>K12 / MC4100 / ATCC 35695 / DSM 6574</strain>
    </source>
</reference>
<reference key="8">
    <citation type="journal article" date="2005" name="Science">
        <title>Global topology analysis of the Escherichia coli inner membrane proteome.</title>
        <authorList>
            <person name="Daley D.O."/>
            <person name="Rapp M."/>
            <person name="Granseth E."/>
            <person name="Melen K."/>
            <person name="Drew D."/>
            <person name="von Heijne G."/>
        </authorList>
    </citation>
    <scope>TOPOLOGY [LARGE SCALE ANALYSIS]</scope>
    <source>
        <strain>K12 / MG1655 / ATCC 47076</strain>
    </source>
</reference>
<protein>
    <recommendedName>
        <fullName>Prepilin leader peptidase/N-methyltransferase</fullName>
    </recommendedName>
    <domain>
        <recommendedName>
            <fullName>Leader peptidase</fullName>
            <ecNumber evidence="4">3.4.23.43</ecNumber>
        </recommendedName>
        <alternativeName>
            <fullName>Prepilin peptidase</fullName>
        </alternativeName>
    </domain>
    <domain>
        <recommendedName>
            <fullName>N-methyltransferase</fullName>
            <ecNumber evidence="1">2.1.1.-</ecNumber>
        </recommendedName>
    </domain>
</protein>
<organism>
    <name type="scientific">Escherichia coli (strain K12)</name>
    <dbReference type="NCBI Taxonomy" id="83333"/>
    <lineage>
        <taxon>Bacteria</taxon>
        <taxon>Pseudomonadati</taxon>
        <taxon>Pseudomonadota</taxon>
        <taxon>Gammaproteobacteria</taxon>
        <taxon>Enterobacterales</taxon>
        <taxon>Enterobacteriaceae</taxon>
        <taxon>Escherichia</taxon>
    </lineage>
</organism>
<accession>P25960</accession>
<accession>Q2M700</accession>
<proteinExistence type="evidence at protein level"/>